<sequence length="432" mass="47487">MGKKSIIILAAGAGTRMKSDTPKVLHKISGKPMLYYSIKEALKLSDDITVVLYHQFEKVKAEIEKYFSNINFVIQDHKNYPGTGGAVMGITPKYEKVLVLNGDMPLIQANELEKFEINATIVMSVLELESADGYGRVIIENGNVKKIVEQKDASEDELKITTANAGIYQFETKFLLENLPKLDNNNAQKEYYITDLVEMAISQGKVLKPLVVNEENFKGVNSKVELADAEVIHQNRIKKEFMKAGVIMRLPDTIYIEEGVEIEGESIIENGVSLLGNAKIINSHIKTNSVVEDSIVKDSDVGPMGRVRPGSELTNTHIGNFVETKKAKLTGVKAGHLSYLGDCSIDEGTNIGCGTITCNYDGVNKHQTIIGKNVFVGSDTQFVAPVNIEDDVLIGAGSTVTGNVKKGELYLTRAKAKTIDGFFYKHFSSKKK</sequence>
<feature type="chain" id="PRO_0000337706" description="Bifunctional protein GlmU">
    <location>
        <begin position="1"/>
        <end position="432"/>
    </location>
</feature>
<feature type="region of interest" description="Pyrophosphorylase" evidence="1">
    <location>
        <begin position="1"/>
        <end position="223"/>
    </location>
</feature>
<feature type="region of interest" description="Linker" evidence="1">
    <location>
        <begin position="224"/>
        <end position="244"/>
    </location>
</feature>
<feature type="region of interest" description="N-acetyltransferase" evidence="1">
    <location>
        <begin position="245"/>
        <end position="432"/>
    </location>
</feature>
<feature type="active site" description="Proton acceptor" evidence="1">
    <location>
        <position position="336"/>
    </location>
</feature>
<feature type="binding site" evidence="1">
    <location>
        <begin position="9"/>
        <end position="12"/>
    </location>
    <ligand>
        <name>UDP-N-acetyl-alpha-D-glucosamine</name>
        <dbReference type="ChEBI" id="CHEBI:57705"/>
    </ligand>
</feature>
<feature type="binding site" evidence="1">
    <location>
        <position position="23"/>
    </location>
    <ligand>
        <name>UDP-N-acetyl-alpha-D-glucosamine</name>
        <dbReference type="ChEBI" id="CHEBI:57705"/>
    </ligand>
</feature>
<feature type="binding site" evidence="1">
    <location>
        <position position="75"/>
    </location>
    <ligand>
        <name>UDP-N-acetyl-alpha-D-glucosamine</name>
        <dbReference type="ChEBI" id="CHEBI:57705"/>
    </ligand>
</feature>
<feature type="binding site" evidence="1">
    <location>
        <begin position="82"/>
        <end position="83"/>
    </location>
    <ligand>
        <name>UDP-N-acetyl-alpha-D-glucosamine</name>
        <dbReference type="ChEBI" id="CHEBI:57705"/>
    </ligand>
</feature>
<feature type="binding site" evidence="1">
    <location>
        <position position="103"/>
    </location>
    <ligand>
        <name>Mg(2+)</name>
        <dbReference type="ChEBI" id="CHEBI:18420"/>
    </ligand>
</feature>
<feature type="binding site" evidence="1">
    <location>
        <position position="135"/>
    </location>
    <ligand>
        <name>UDP-N-acetyl-alpha-D-glucosamine</name>
        <dbReference type="ChEBI" id="CHEBI:57705"/>
    </ligand>
</feature>
<feature type="binding site" evidence="1">
    <location>
        <position position="149"/>
    </location>
    <ligand>
        <name>UDP-N-acetyl-alpha-D-glucosamine</name>
        <dbReference type="ChEBI" id="CHEBI:57705"/>
    </ligand>
</feature>
<feature type="binding site" evidence="1">
    <location>
        <position position="164"/>
    </location>
    <ligand>
        <name>UDP-N-acetyl-alpha-D-glucosamine</name>
        <dbReference type="ChEBI" id="CHEBI:57705"/>
    </ligand>
</feature>
<feature type="binding site" evidence="1">
    <location>
        <position position="221"/>
    </location>
    <ligand>
        <name>Mg(2+)</name>
        <dbReference type="ChEBI" id="CHEBI:18420"/>
    </ligand>
</feature>
<feature type="binding site" evidence="1">
    <location>
        <position position="221"/>
    </location>
    <ligand>
        <name>UDP-N-acetyl-alpha-D-glucosamine</name>
        <dbReference type="ChEBI" id="CHEBI:57705"/>
    </ligand>
</feature>
<feature type="binding site" evidence="1">
    <location>
        <position position="308"/>
    </location>
    <ligand>
        <name>UDP-N-acetyl-alpha-D-glucosamine</name>
        <dbReference type="ChEBI" id="CHEBI:57705"/>
    </ligand>
</feature>
<feature type="binding site" evidence="1">
    <location>
        <position position="325"/>
    </location>
    <ligand>
        <name>UDP-N-acetyl-alpha-D-glucosamine</name>
        <dbReference type="ChEBI" id="CHEBI:57705"/>
    </ligand>
</feature>
<feature type="binding site" evidence="1">
    <location>
        <position position="339"/>
    </location>
    <ligand>
        <name>UDP-N-acetyl-alpha-D-glucosamine</name>
        <dbReference type="ChEBI" id="CHEBI:57705"/>
    </ligand>
</feature>
<feature type="binding site" evidence="1">
    <location>
        <position position="350"/>
    </location>
    <ligand>
        <name>UDP-N-acetyl-alpha-D-glucosamine</name>
        <dbReference type="ChEBI" id="CHEBI:57705"/>
    </ligand>
</feature>
<feature type="binding site" evidence="1">
    <location>
        <begin position="359"/>
        <end position="360"/>
    </location>
    <ligand>
        <name>acetyl-CoA</name>
        <dbReference type="ChEBI" id="CHEBI:57288"/>
    </ligand>
</feature>
<feature type="binding site" evidence="1">
    <location>
        <position position="378"/>
    </location>
    <ligand>
        <name>acetyl-CoA</name>
        <dbReference type="ChEBI" id="CHEBI:57288"/>
    </ligand>
</feature>
<feature type="binding site" evidence="1">
    <location>
        <position position="396"/>
    </location>
    <ligand>
        <name>acetyl-CoA</name>
        <dbReference type="ChEBI" id="CHEBI:57288"/>
    </ligand>
</feature>
<feature type="binding site" evidence="1">
    <location>
        <position position="413"/>
    </location>
    <ligand>
        <name>acetyl-CoA</name>
        <dbReference type="ChEBI" id="CHEBI:57288"/>
    </ligand>
</feature>
<name>GLMU_ALIB4</name>
<protein>
    <recommendedName>
        <fullName evidence="1">Bifunctional protein GlmU</fullName>
    </recommendedName>
    <domain>
        <recommendedName>
            <fullName evidence="1">UDP-N-acetylglucosamine pyrophosphorylase</fullName>
            <ecNumber evidence="1">2.7.7.23</ecNumber>
        </recommendedName>
        <alternativeName>
            <fullName evidence="1">N-acetylglucosamine-1-phosphate uridyltransferase</fullName>
        </alternativeName>
    </domain>
    <domain>
        <recommendedName>
            <fullName evidence="1">Glucosamine-1-phosphate N-acetyltransferase</fullName>
            <ecNumber evidence="1">2.3.1.157</ecNumber>
        </recommendedName>
    </domain>
</protein>
<proteinExistence type="inferred from homology"/>
<gene>
    <name evidence="1" type="primary">glmU</name>
    <name type="ordered locus">Abu_2204</name>
</gene>
<accession>A8EWU5</accession>
<reference key="1">
    <citation type="journal article" date="2007" name="PLoS ONE">
        <title>The complete genome sequence and analysis of the Epsilonproteobacterium Arcobacter butzleri.</title>
        <authorList>
            <person name="Miller W.G."/>
            <person name="Parker C.T."/>
            <person name="Rubenfield M."/>
            <person name="Mendz G.L."/>
            <person name="Woesten M.M.S.M."/>
            <person name="Ussery D.W."/>
            <person name="Stolz J.F."/>
            <person name="Binnewies T.T."/>
            <person name="Hallin P.F."/>
            <person name="Wang G."/>
            <person name="Malek J.A."/>
            <person name="Rogosin A."/>
            <person name="Stanker L.H."/>
            <person name="Mandrell R.E."/>
        </authorList>
    </citation>
    <scope>NUCLEOTIDE SEQUENCE [LARGE SCALE GENOMIC DNA]</scope>
    <source>
        <strain>RM4018</strain>
    </source>
</reference>
<evidence type="ECO:0000255" key="1">
    <source>
        <dbReference type="HAMAP-Rule" id="MF_01631"/>
    </source>
</evidence>
<organism>
    <name type="scientific">Aliarcobacter butzleri (strain RM4018)</name>
    <name type="common">Arcobacter butzleri</name>
    <dbReference type="NCBI Taxonomy" id="367737"/>
    <lineage>
        <taxon>Bacteria</taxon>
        <taxon>Pseudomonadati</taxon>
        <taxon>Campylobacterota</taxon>
        <taxon>Epsilonproteobacteria</taxon>
        <taxon>Campylobacterales</taxon>
        <taxon>Arcobacteraceae</taxon>
        <taxon>Aliarcobacter</taxon>
    </lineage>
</organism>
<comment type="function">
    <text evidence="1">Catalyzes the last two sequential reactions in the de novo biosynthetic pathway for UDP-N-acetylglucosamine (UDP-GlcNAc). The C-terminal domain catalyzes the transfer of acetyl group from acetyl coenzyme A to glucosamine-1-phosphate (GlcN-1-P) to produce N-acetylglucosamine-1-phosphate (GlcNAc-1-P), which is converted into UDP-GlcNAc by the transfer of uridine 5-monophosphate (from uridine 5-triphosphate), a reaction catalyzed by the N-terminal domain.</text>
</comment>
<comment type="catalytic activity">
    <reaction evidence="1">
        <text>alpha-D-glucosamine 1-phosphate + acetyl-CoA = N-acetyl-alpha-D-glucosamine 1-phosphate + CoA + H(+)</text>
        <dbReference type="Rhea" id="RHEA:13725"/>
        <dbReference type="ChEBI" id="CHEBI:15378"/>
        <dbReference type="ChEBI" id="CHEBI:57287"/>
        <dbReference type="ChEBI" id="CHEBI:57288"/>
        <dbReference type="ChEBI" id="CHEBI:57776"/>
        <dbReference type="ChEBI" id="CHEBI:58516"/>
        <dbReference type="EC" id="2.3.1.157"/>
    </reaction>
</comment>
<comment type="catalytic activity">
    <reaction evidence="1">
        <text>N-acetyl-alpha-D-glucosamine 1-phosphate + UTP + H(+) = UDP-N-acetyl-alpha-D-glucosamine + diphosphate</text>
        <dbReference type="Rhea" id="RHEA:13509"/>
        <dbReference type="ChEBI" id="CHEBI:15378"/>
        <dbReference type="ChEBI" id="CHEBI:33019"/>
        <dbReference type="ChEBI" id="CHEBI:46398"/>
        <dbReference type="ChEBI" id="CHEBI:57705"/>
        <dbReference type="ChEBI" id="CHEBI:57776"/>
        <dbReference type="EC" id="2.7.7.23"/>
    </reaction>
</comment>
<comment type="cofactor">
    <cofactor evidence="1">
        <name>Mg(2+)</name>
        <dbReference type="ChEBI" id="CHEBI:18420"/>
    </cofactor>
    <text evidence="1">Binds 1 Mg(2+) ion per subunit.</text>
</comment>
<comment type="pathway">
    <text evidence="1">Nucleotide-sugar biosynthesis; UDP-N-acetyl-alpha-D-glucosamine biosynthesis; N-acetyl-alpha-D-glucosamine 1-phosphate from alpha-D-glucosamine 6-phosphate (route II): step 2/2.</text>
</comment>
<comment type="pathway">
    <text evidence="1">Nucleotide-sugar biosynthesis; UDP-N-acetyl-alpha-D-glucosamine biosynthesis; UDP-N-acetyl-alpha-D-glucosamine from N-acetyl-alpha-D-glucosamine 1-phosphate: step 1/1.</text>
</comment>
<comment type="pathway">
    <text evidence="1">Bacterial outer membrane biogenesis; LPS lipid A biosynthesis.</text>
</comment>
<comment type="subunit">
    <text evidence="1">Homotrimer.</text>
</comment>
<comment type="subcellular location">
    <subcellularLocation>
        <location evidence="1">Cytoplasm</location>
    </subcellularLocation>
</comment>
<comment type="similarity">
    <text evidence="1">In the N-terminal section; belongs to the N-acetylglucosamine-1-phosphate uridyltransferase family.</text>
</comment>
<comment type="similarity">
    <text evidence="1">In the C-terminal section; belongs to the transferase hexapeptide repeat family.</text>
</comment>
<dbReference type="EC" id="2.7.7.23" evidence="1"/>
<dbReference type="EC" id="2.3.1.157" evidence="1"/>
<dbReference type="EMBL" id="CP000361">
    <property type="protein sequence ID" value="ABV68418.1"/>
    <property type="molecule type" value="Genomic_DNA"/>
</dbReference>
<dbReference type="RefSeq" id="WP_012148055.1">
    <property type="nucleotide sequence ID" value="NC_009850.1"/>
</dbReference>
<dbReference type="SMR" id="A8EWU5"/>
<dbReference type="STRING" id="367737.Abu_2204"/>
<dbReference type="GeneID" id="24303429"/>
<dbReference type="KEGG" id="abu:Abu_2204"/>
<dbReference type="eggNOG" id="COG1207">
    <property type="taxonomic scope" value="Bacteria"/>
</dbReference>
<dbReference type="HOGENOM" id="CLU_029499_15_2_7"/>
<dbReference type="UniPathway" id="UPA00113">
    <property type="reaction ID" value="UER00532"/>
</dbReference>
<dbReference type="UniPathway" id="UPA00113">
    <property type="reaction ID" value="UER00533"/>
</dbReference>
<dbReference type="UniPathway" id="UPA00973"/>
<dbReference type="Proteomes" id="UP000001136">
    <property type="component" value="Chromosome"/>
</dbReference>
<dbReference type="GO" id="GO:0005737">
    <property type="term" value="C:cytoplasm"/>
    <property type="evidence" value="ECO:0007669"/>
    <property type="project" value="UniProtKB-SubCell"/>
</dbReference>
<dbReference type="GO" id="GO:0016020">
    <property type="term" value="C:membrane"/>
    <property type="evidence" value="ECO:0007669"/>
    <property type="project" value="GOC"/>
</dbReference>
<dbReference type="GO" id="GO:0019134">
    <property type="term" value="F:glucosamine-1-phosphate N-acetyltransferase activity"/>
    <property type="evidence" value="ECO:0007669"/>
    <property type="project" value="UniProtKB-UniRule"/>
</dbReference>
<dbReference type="GO" id="GO:0000287">
    <property type="term" value="F:magnesium ion binding"/>
    <property type="evidence" value="ECO:0007669"/>
    <property type="project" value="UniProtKB-UniRule"/>
</dbReference>
<dbReference type="GO" id="GO:0003977">
    <property type="term" value="F:UDP-N-acetylglucosamine diphosphorylase activity"/>
    <property type="evidence" value="ECO:0007669"/>
    <property type="project" value="UniProtKB-UniRule"/>
</dbReference>
<dbReference type="GO" id="GO:0000902">
    <property type="term" value="P:cell morphogenesis"/>
    <property type="evidence" value="ECO:0007669"/>
    <property type="project" value="UniProtKB-UniRule"/>
</dbReference>
<dbReference type="GO" id="GO:0071555">
    <property type="term" value="P:cell wall organization"/>
    <property type="evidence" value="ECO:0007669"/>
    <property type="project" value="UniProtKB-KW"/>
</dbReference>
<dbReference type="GO" id="GO:0009245">
    <property type="term" value="P:lipid A biosynthetic process"/>
    <property type="evidence" value="ECO:0007669"/>
    <property type="project" value="UniProtKB-UniRule"/>
</dbReference>
<dbReference type="GO" id="GO:0009252">
    <property type="term" value="P:peptidoglycan biosynthetic process"/>
    <property type="evidence" value="ECO:0007669"/>
    <property type="project" value="UniProtKB-UniRule"/>
</dbReference>
<dbReference type="GO" id="GO:0008360">
    <property type="term" value="P:regulation of cell shape"/>
    <property type="evidence" value="ECO:0007669"/>
    <property type="project" value="UniProtKB-KW"/>
</dbReference>
<dbReference type="GO" id="GO:0006048">
    <property type="term" value="P:UDP-N-acetylglucosamine biosynthetic process"/>
    <property type="evidence" value="ECO:0007669"/>
    <property type="project" value="UniProtKB-UniPathway"/>
</dbReference>
<dbReference type="CDD" id="cd02540">
    <property type="entry name" value="GT2_GlmU_N_bac"/>
    <property type="match status" value="1"/>
</dbReference>
<dbReference type="Gene3D" id="2.160.10.10">
    <property type="entry name" value="Hexapeptide repeat proteins"/>
    <property type="match status" value="1"/>
</dbReference>
<dbReference type="Gene3D" id="3.90.550.10">
    <property type="entry name" value="Spore Coat Polysaccharide Biosynthesis Protein SpsA, Chain A"/>
    <property type="match status" value="1"/>
</dbReference>
<dbReference type="HAMAP" id="MF_01631">
    <property type="entry name" value="GlmU"/>
    <property type="match status" value="1"/>
</dbReference>
<dbReference type="InterPro" id="IPR005882">
    <property type="entry name" value="Bifunctional_GlmU"/>
</dbReference>
<dbReference type="InterPro" id="IPR050065">
    <property type="entry name" value="GlmU-like"/>
</dbReference>
<dbReference type="InterPro" id="IPR001451">
    <property type="entry name" value="Hexapep"/>
</dbReference>
<dbReference type="InterPro" id="IPR025877">
    <property type="entry name" value="MobA-like_NTP_Trfase"/>
</dbReference>
<dbReference type="InterPro" id="IPR029044">
    <property type="entry name" value="Nucleotide-diphossugar_trans"/>
</dbReference>
<dbReference type="InterPro" id="IPR011004">
    <property type="entry name" value="Trimer_LpxA-like_sf"/>
</dbReference>
<dbReference type="NCBIfam" id="TIGR01173">
    <property type="entry name" value="glmU"/>
    <property type="match status" value="1"/>
</dbReference>
<dbReference type="NCBIfam" id="NF010939">
    <property type="entry name" value="PRK14359.1"/>
    <property type="match status" value="1"/>
</dbReference>
<dbReference type="PANTHER" id="PTHR43584:SF3">
    <property type="entry name" value="BIFUNCTIONAL PROTEIN GLMU"/>
    <property type="match status" value="1"/>
</dbReference>
<dbReference type="PANTHER" id="PTHR43584">
    <property type="entry name" value="NUCLEOTIDYL TRANSFERASE"/>
    <property type="match status" value="1"/>
</dbReference>
<dbReference type="Pfam" id="PF00132">
    <property type="entry name" value="Hexapep"/>
    <property type="match status" value="1"/>
</dbReference>
<dbReference type="Pfam" id="PF12804">
    <property type="entry name" value="NTP_transf_3"/>
    <property type="match status" value="1"/>
</dbReference>
<dbReference type="SUPFAM" id="SSF53448">
    <property type="entry name" value="Nucleotide-diphospho-sugar transferases"/>
    <property type="match status" value="1"/>
</dbReference>
<dbReference type="SUPFAM" id="SSF51161">
    <property type="entry name" value="Trimeric LpxA-like enzymes"/>
    <property type="match status" value="1"/>
</dbReference>
<keyword id="KW-0012">Acyltransferase</keyword>
<keyword id="KW-0133">Cell shape</keyword>
<keyword id="KW-0961">Cell wall biogenesis/degradation</keyword>
<keyword id="KW-0963">Cytoplasm</keyword>
<keyword id="KW-0460">Magnesium</keyword>
<keyword id="KW-0479">Metal-binding</keyword>
<keyword id="KW-0511">Multifunctional enzyme</keyword>
<keyword id="KW-0548">Nucleotidyltransferase</keyword>
<keyword id="KW-0573">Peptidoglycan synthesis</keyword>
<keyword id="KW-1185">Reference proteome</keyword>
<keyword id="KW-0677">Repeat</keyword>
<keyword id="KW-0808">Transferase</keyword>